<reference key="1">
    <citation type="submission" date="2006-10" db="EMBL/GenBank/DDBJ databases">
        <title>Complete sequence of Syntrophobacter fumaroxidans MPOB.</title>
        <authorList>
            <consortium name="US DOE Joint Genome Institute"/>
            <person name="Copeland A."/>
            <person name="Lucas S."/>
            <person name="Lapidus A."/>
            <person name="Barry K."/>
            <person name="Detter J.C."/>
            <person name="Glavina del Rio T."/>
            <person name="Hammon N."/>
            <person name="Israni S."/>
            <person name="Pitluck S."/>
            <person name="Goltsman E.G."/>
            <person name="Martinez M."/>
            <person name="Schmutz J."/>
            <person name="Larimer F."/>
            <person name="Land M."/>
            <person name="Hauser L."/>
            <person name="Kyrpides N."/>
            <person name="Kim E."/>
            <person name="Boone D.R."/>
            <person name="Brockman F."/>
            <person name="Culley D."/>
            <person name="Ferry J."/>
            <person name="Gunsalus R."/>
            <person name="McInerney M.J."/>
            <person name="Morrison M."/>
            <person name="Plugge C."/>
            <person name="Rohlin L."/>
            <person name="Scholten J."/>
            <person name="Sieber J."/>
            <person name="Stams A.J.M."/>
            <person name="Worm P."/>
            <person name="Henstra A.M."/>
            <person name="Richardson P."/>
        </authorList>
    </citation>
    <scope>NUCLEOTIDE SEQUENCE [LARGE SCALE GENOMIC DNA]</scope>
    <source>
        <strain>DSM 10017 / MPOB</strain>
    </source>
</reference>
<gene>
    <name evidence="1" type="primary">murB</name>
    <name type="ordered locus">Sfum_3471</name>
</gene>
<keyword id="KW-0131">Cell cycle</keyword>
<keyword id="KW-0132">Cell division</keyword>
<keyword id="KW-0133">Cell shape</keyword>
<keyword id="KW-0961">Cell wall biogenesis/degradation</keyword>
<keyword id="KW-0963">Cytoplasm</keyword>
<keyword id="KW-0274">FAD</keyword>
<keyword id="KW-0285">Flavoprotein</keyword>
<keyword id="KW-0521">NADP</keyword>
<keyword id="KW-0560">Oxidoreductase</keyword>
<keyword id="KW-0573">Peptidoglycan synthesis</keyword>
<keyword id="KW-1185">Reference proteome</keyword>
<protein>
    <recommendedName>
        <fullName evidence="1">UDP-N-acetylenolpyruvoylglucosamine reductase</fullName>
        <ecNumber evidence="1">1.3.1.98</ecNumber>
    </recommendedName>
    <alternativeName>
        <fullName evidence="1">UDP-N-acetylmuramate dehydrogenase</fullName>
    </alternativeName>
</protein>
<comment type="function">
    <text evidence="1">Cell wall formation.</text>
</comment>
<comment type="catalytic activity">
    <reaction evidence="1">
        <text>UDP-N-acetyl-alpha-D-muramate + NADP(+) = UDP-N-acetyl-3-O-(1-carboxyvinyl)-alpha-D-glucosamine + NADPH + H(+)</text>
        <dbReference type="Rhea" id="RHEA:12248"/>
        <dbReference type="ChEBI" id="CHEBI:15378"/>
        <dbReference type="ChEBI" id="CHEBI:57783"/>
        <dbReference type="ChEBI" id="CHEBI:58349"/>
        <dbReference type="ChEBI" id="CHEBI:68483"/>
        <dbReference type="ChEBI" id="CHEBI:70757"/>
        <dbReference type="EC" id="1.3.1.98"/>
    </reaction>
</comment>
<comment type="cofactor">
    <cofactor evidence="1">
        <name>FAD</name>
        <dbReference type="ChEBI" id="CHEBI:57692"/>
    </cofactor>
</comment>
<comment type="pathway">
    <text evidence="1">Cell wall biogenesis; peptidoglycan biosynthesis.</text>
</comment>
<comment type="subcellular location">
    <subcellularLocation>
        <location evidence="1">Cytoplasm</location>
    </subcellularLocation>
</comment>
<comment type="similarity">
    <text evidence="1">Belongs to the MurB family.</text>
</comment>
<evidence type="ECO:0000255" key="1">
    <source>
        <dbReference type="HAMAP-Rule" id="MF_00037"/>
    </source>
</evidence>
<sequence length="345" mass="37041">MIDNKRGSSYLNSLPEGLSAEECDRYSAVVSLCWNVLGELQDVEFKWHEPLAYHTTFRVGGPAACLARPRSESALLALLERVRENSVPYVVLGGGSNVLVTDGPIPALVIQLIHVAAGLAFNKGRSSSRPLVVVGAGVPISRLLRFCVRNELGGLECLVGIPGSVGGAVVMNAGTAEGTIAEALEWLDALDGAGQRQLVFKADLPAGYRSMGLPEAWLILGGAFRLHVSSGRSLKREMRSLMVRRKATQPLGRPSAGCVFKNPVEAPAGALIERAGLKGFRMGNAQVSDKHANWIINLGSARARDILALISLVENEVFGKFGVRLEREIRILSPEKNSLNQMLNS</sequence>
<accession>A0LNZ0</accession>
<proteinExistence type="inferred from homology"/>
<feature type="chain" id="PRO_0000332515" description="UDP-N-acetylenolpyruvoylglucosamine reductase">
    <location>
        <begin position="1"/>
        <end position="345"/>
    </location>
</feature>
<feature type="domain" description="FAD-binding PCMH-type" evidence="1">
    <location>
        <begin position="59"/>
        <end position="254"/>
    </location>
</feature>
<feature type="active site" evidence="1">
    <location>
        <position position="209"/>
    </location>
</feature>
<feature type="active site" description="Proton donor" evidence="1">
    <location>
        <position position="258"/>
    </location>
</feature>
<feature type="active site" evidence="1">
    <location>
        <position position="328"/>
    </location>
</feature>
<dbReference type="EC" id="1.3.1.98" evidence="1"/>
<dbReference type="EMBL" id="CP000478">
    <property type="protein sequence ID" value="ABK19142.1"/>
    <property type="molecule type" value="Genomic_DNA"/>
</dbReference>
<dbReference type="RefSeq" id="WP_011700267.1">
    <property type="nucleotide sequence ID" value="NC_008554.1"/>
</dbReference>
<dbReference type="SMR" id="A0LNZ0"/>
<dbReference type="FunCoup" id="A0LNZ0">
    <property type="interactions" value="507"/>
</dbReference>
<dbReference type="STRING" id="335543.Sfum_3471"/>
<dbReference type="KEGG" id="sfu:Sfum_3471"/>
<dbReference type="eggNOG" id="COG0812">
    <property type="taxonomic scope" value="Bacteria"/>
</dbReference>
<dbReference type="HOGENOM" id="CLU_035304_1_1_7"/>
<dbReference type="InParanoid" id="A0LNZ0"/>
<dbReference type="OrthoDB" id="9804753at2"/>
<dbReference type="UniPathway" id="UPA00219"/>
<dbReference type="Proteomes" id="UP000001784">
    <property type="component" value="Chromosome"/>
</dbReference>
<dbReference type="GO" id="GO:0005829">
    <property type="term" value="C:cytosol"/>
    <property type="evidence" value="ECO:0007669"/>
    <property type="project" value="TreeGrafter"/>
</dbReference>
<dbReference type="GO" id="GO:0071949">
    <property type="term" value="F:FAD binding"/>
    <property type="evidence" value="ECO:0007669"/>
    <property type="project" value="InterPro"/>
</dbReference>
<dbReference type="GO" id="GO:0008762">
    <property type="term" value="F:UDP-N-acetylmuramate dehydrogenase activity"/>
    <property type="evidence" value="ECO:0007669"/>
    <property type="project" value="UniProtKB-UniRule"/>
</dbReference>
<dbReference type="GO" id="GO:0051301">
    <property type="term" value="P:cell division"/>
    <property type="evidence" value="ECO:0007669"/>
    <property type="project" value="UniProtKB-KW"/>
</dbReference>
<dbReference type="GO" id="GO:0071555">
    <property type="term" value="P:cell wall organization"/>
    <property type="evidence" value="ECO:0007669"/>
    <property type="project" value="UniProtKB-KW"/>
</dbReference>
<dbReference type="GO" id="GO:0009252">
    <property type="term" value="P:peptidoglycan biosynthetic process"/>
    <property type="evidence" value="ECO:0007669"/>
    <property type="project" value="UniProtKB-UniRule"/>
</dbReference>
<dbReference type="GO" id="GO:0008360">
    <property type="term" value="P:regulation of cell shape"/>
    <property type="evidence" value="ECO:0007669"/>
    <property type="project" value="UniProtKB-KW"/>
</dbReference>
<dbReference type="Gene3D" id="3.30.465.10">
    <property type="match status" value="1"/>
</dbReference>
<dbReference type="Gene3D" id="3.90.78.10">
    <property type="entry name" value="UDP-N-acetylenolpyruvoylglucosamine reductase, C-terminal domain"/>
    <property type="match status" value="1"/>
</dbReference>
<dbReference type="Gene3D" id="3.30.43.10">
    <property type="entry name" value="Uridine Diphospho-n-acetylenolpyruvylglucosamine Reductase, domain 2"/>
    <property type="match status" value="1"/>
</dbReference>
<dbReference type="HAMAP" id="MF_00037">
    <property type="entry name" value="MurB"/>
    <property type="match status" value="1"/>
</dbReference>
<dbReference type="InterPro" id="IPR016166">
    <property type="entry name" value="FAD-bd_PCMH"/>
</dbReference>
<dbReference type="InterPro" id="IPR036318">
    <property type="entry name" value="FAD-bd_PCMH-like_sf"/>
</dbReference>
<dbReference type="InterPro" id="IPR016167">
    <property type="entry name" value="FAD-bd_PCMH_sub1"/>
</dbReference>
<dbReference type="InterPro" id="IPR016169">
    <property type="entry name" value="FAD-bd_PCMH_sub2"/>
</dbReference>
<dbReference type="InterPro" id="IPR003170">
    <property type="entry name" value="MurB"/>
</dbReference>
<dbReference type="InterPro" id="IPR011601">
    <property type="entry name" value="MurB_C"/>
</dbReference>
<dbReference type="InterPro" id="IPR036635">
    <property type="entry name" value="MurB_C_sf"/>
</dbReference>
<dbReference type="InterPro" id="IPR006094">
    <property type="entry name" value="Oxid_FAD_bind_N"/>
</dbReference>
<dbReference type="NCBIfam" id="TIGR00179">
    <property type="entry name" value="murB"/>
    <property type="match status" value="1"/>
</dbReference>
<dbReference type="NCBIfam" id="NF010480">
    <property type="entry name" value="PRK13905.1"/>
    <property type="match status" value="1"/>
</dbReference>
<dbReference type="PANTHER" id="PTHR21071">
    <property type="entry name" value="UDP-N-ACETYLENOLPYRUVOYLGLUCOSAMINE REDUCTASE"/>
    <property type="match status" value="1"/>
</dbReference>
<dbReference type="PANTHER" id="PTHR21071:SF4">
    <property type="entry name" value="UDP-N-ACETYLENOLPYRUVOYLGLUCOSAMINE REDUCTASE"/>
    <property type="match status" value="1"/>
</dbReference>
<dbReference type="Pfam" id="PF01565">
    <property type="entry name" value="FAD_binding_4"/>
    <property type="match status" value="1"/>
</dbReference>
<dbReference type="Pfam" id="PF02873">
    <property type="entry name" value="MurB_C"/>
    <property type="match status" value="1"/>
</dbReference>
<dbReference type="SUPFAM" id="SSF56176">
    <property type="entry name" value="FAD-binding/transporter-associated domain-like"/>
    <property type="match status" value="1"/>
</dbReference>
<dbReference type="SUPFAM" id="SSF56194">
    <property type="entry name" value="Uridine diphospho-N-Acetylenolpyruvylglucosamine reductase, MurB, C-terminal domain"/>
    <property type="match status" value="1"/>
</dbReference>
<dbReference type="PROSITE" id="PS51387">
    <property type="entry name" value="FAD_PCMH"/>
    <property type="match status" value="1"/>
</dbReference>
<organism>
    <name type="scientific">Syntrophobacter fumaroxidans (strain DSM 10017 / MPOB)</name>
    <dbReference type="NCBI Taxonomy" id="335543"/>
    <lineage>
        <taxon>Bacteria</taxon>
        <taxon>Pseudomonadati</taxon>
        <taxon>Thermodesulfobacteriota</taxon>
        <taxon>Syntrophobacteria</taxon>
        <taxon>Syntrophobacterales</taxon>
        <taxon>Syntrophobacteraceae</taxon>
        <taxon>Syntrophobacter</taxon>
    </lineage>
</organism>
<name>MURB_SYNFM</name>